<name>RL19_NITOC</name>
<protein>
    <recommendedName>
        <fullName evidence="1">Large ribosomal subunit protein bL19</fullName>
    </recommendedName>
    <alternativeName>
        <fullName evidence="2">50S ribosomal protein L19</fullName>
    </alternativeName>
</protein>
<organism>
    <name type="scientific">Nitrosococcus oceani (strain ATCC 19707 / BCRC 17464 / JCM 30415 / NCIMB 11848 / C-107)</name>
    <dbReference type="NCBI Taxonomy" id="323261"/>
    <lineage>
        <taxon>Bacteria</taxon>
        <taxon>Pseudomonadati</taxon>
        <taxon>Pseudomonadota</taxon>
        <taxon>Gammaproteobacteria</taxon>
        <taxon>Chromatiales</taxon>
        <taxon>Chromatiaceae</taxon>
        <taxon>Nitrosococcus</taxon>
    </lineage>
</organism>
<gene>
    <name evidence="1" type="primary">rplS</name>
    <name type="ordered locus">Noc_2257</name>
</gene>
<reference key="1">
    <citation type="journal article" date="2006" name="Appl. Environ. Microbiol.">
        <title>Complete genome sequence of the marine, chemolithoautotrophic, ammonia-oxidizing bacterium Nitrosococcus oceani ATCC 19707.</title>
        <authorList>
            <person name="Klotz M.G."/>
            <person name="Arp D.J."/>
            <person name="Chain P.S.G."/>
            <person name="El-Sheikh A.F."/>
            <person name="Hauser L.J."/>
            <person name="Hommes N.G."/>
            <person name="Larimer F.W."/>
            <person name="Malfatti S.A."/>
            <person name="Norton J.M."/>
            <person name="Poret-Peterson A.T."/>
            <person name="Vergez L.M."/>
            <person name="Ward B.B."/>
        </authorList>
    </citation>
    <scope>NUCLEOTIDE SEQUENCE [LARGE SCALE GENOMIC DNA]</scope>
    <source>
        <strain>ATCC 19707 / BCRC 17464 / JCM 30415 / NCIMB 11848 / C-107</strain>
    </source>
</reference>
<accession>Q3J8Y1</accession>
<dbReference type="EMBL" id="CP000127">
    <property type="protein sequence ID" value="ABA58715.1"/>
    <property type="molecule type" value="Genomic_DNA"/>
</dbReference>
<dbReference type="RefSeq" id="WP_002809179.1">
    <property type="nucleotide sequence ID" value="NC_007484.1"/>
</dbReference>
<dbReference type="SMR" id="Q3J8Y1"/>
<dbReference type="FunCoup" id="Q3J8Y1">
    <property type="interactions" value="673"/>
</dbReference>
<dbReference type="STRING" id="323261.Noc_2257"/>
<dbReference type="KEGG" id="noc:Noc_2257"/>
<dbReference type="eggNOG" id="COG0335">
    <property type="taxonomic scope" value="Bacteria"/>
</dbReference>
<dbReference type="HOGENOM" id="CLU_103507_2_1_6"/>
<dbReference type="InParanoid" id="Q3J8Y1"/>
<dbReference type="Proteomes" id="UP000006838">
    <property type="component" value="Chromosome"/>
</dbReference>
<dbReference type="GO" id="GO:0022625">
    <property type="term" value="C:cytosolic large ribosomal subunit"/>
    <property type="evidence" value="ECO:0007669"/>
    <property type="project" value="TreeGrafter"/>
</dbReference>
<dbReference type="GO" id="GO:0003735">
    <property type="term" value="F:structural constituent of ribosome"/>
    <property type="evidence" value="ECO:0007669"/>
    <property type="project" value="InterPro"/>
</dbReference>
<dbReference type="GO" id="GO:0006412">
    <property type="term" value="P:translation"/>
    <property type="evidence" value="ECO:0007669"/>
    <property type="project" value="UniProtKB-UniRule"/>
</dbReference>
<dbReference type="FunFam" id="2.30.30.790:FF:000001">
    <property type="entry name" value="50S ribosomal protein L19"/>
    <property type="match status" value="1"/>
</dbReference>
<dbReference type="Gene3D" id="2.30.30.790">
    <property type="match status" value="1"/>
</dbReference>
<dbReference type="HAMAP" id="MF_00402">
    <property type="entry name" value="Ribosomal_bL19"/>
    <property type="match status" value="1"/>
</dbReference>
<dbReference type="InterPro" id="IPR001857">
    <property type="entry name" value="Ribosomal_bL19"/>
</dbReference>
<dbReference type="InterPro" id="IPR018257">
    <property type="entry name" value="Ribosomal_bL19_CS"/>
</dbReference>
<dbReference type="InterPro" id="IPR038657">
    <property type="entry name" value="Ribosomal_bL19_sf"/>
</dbReference>
<dbReference type="InterPro" id="IPR008991">
    <property type="entry name" value="Translation_prot_SH3-like_sf"/>
</dbReference>
<dbReference type="NCBIfam" id="TIGR01024">
    <property type="entry name" value="rplS_bact"/>
    <property type="match status" value="1"/>
</dbReference>
<dbReference type="PANTHER" id="PTHR15680:SF9">
    <property type="entry name" value="LARGE RIBOSOMAL SUBUNIT PROTEIN BL19M"/>
    <property type="match status" value="1"/>
</dbReference>
<dbReference type="PANTHER" id="PTHR15680">
    <property type="entry name" value="RIBOSOMAL PROTEIN L19"/>
    <property type="match status" value="1"/>
</dbReference>
<dbReference type="Pfam" id="PF01245">
    <property type="entry name" value="Ribosomal_L19"/>
    <property type="match status" value="1"/>
</dbReference>
<dbReference type="PIRSF" id="PIRSF002191">
    <property type="entry name" value="Ribosomal_L19"/>
    <property type="match status" value="1"/>
</dbReference>
<dbReference type="PRINTS" id="PR00061">
    <property type="entry name" value="RIBOSOMALL19"/>
</dbReference>
<dbReference type="SUPFAM" id="SSF50104">
    <property type="entry name" value="Translation proteins SH3-like domain"/>
    <property type="match status" value="1"/>
</dbReference>
<dbReference type="PROSITE" id="PS01015">
    <property type="entry name" value="RIBOSOMAL_L19"/>
    <property type="match status" value="1"/>
</dbReference>
<evidence type="ECO:0000255" key="1">
    <source>
        <dbReference type="HAMAP-Rule" id="MF_00402"/>
    </source>
</evidence>
<evidence type="ECO:0000305" key="2"/>
<proteinExistence type="inferred from homology"/>
<feature type="chain" id="PRO_0000226858" description="Large ribosomal subunit protein bL19">
    <location>
        <begin position="1"/>
        <end position="115"/>
    </location>
</feature>
<sequence length="115" mass="13247">MSNNIIKAIESEQLKQDLPEFCPGDTVQVQVRVKEGTRERLQAFEGVVIAKRNRGLNSSFTVRKISHGEGVERVFQTHSPTLESILVKRRGDVRRAKLYYLRERRGKAARIKEKI</sequence>
<comment type="function">
    <text evidence="1">This protein is located at the 30S-50S ribosomal subunit interface and may play a role in the structure and function of the aminoacyl-tRNA binding site.</text>
</comment>
<comment type="similarity">
    <text evidence="1">Belongs to the bacterial ribosomal protein bL19 family.</text>
</comment>
<keyword id="KW-1185">Reference proteome</keyword>
<keyword id="KW-0687">Ribonucleoprotein</keyword>
<keyword id="KW-0689">Ribosomal protein</keyword>